<gene>
    <name type="primary">alx</name>
    <name type="ordered locus">plu3992</name>
</gene>
<feature type="chain" id="PRO_0000103413" description="Putative membrane-bound redox modulator Alx">
    <location>
        <begin position="1"/>
        <end position="320"/>
    </location>
</feature>
<feature type="transmembrane region" description="Helical" evidence="2">
    <location>
        <begin position="3"/>
        <end position="23"/>
    </location>
</feature>
<feature type="transmembrane region" description="Helical" evidence="2">
    <location>
        <begin position="41"/>
        <end position="61"/>
    </location>
</feature>
<feature type="transmembrane region" description="Helical" evidence="2">
    <location>
        <begin position="88"/>
        <end position="108"/>
    </location>
</feature>
<feature type="transmembrane region" description="Helical" evidence="2">
    <location>
        <begin position="114"/>
        <end position="134"/>
    </location>
</feature>
<feature type="transmembrane region" description="Helical" evidence="2">
    <location>
        <begin position="136"/>
        <end position="156"/>
    </location>
</feature>
<feature type="transmembrane region" description="Helical" evidence="2">
    <location>
        <begin position="199"/>
        <end position="219"/>
    </location>
</feature>
<feature type="transmembrane region" description="Helical" evidence="2">
    <location>
        <begin position="226"/>
        <end position="246"/>
    </location>
</feature>
<feature type="transmembrane region" description="Helical" evidence="2">
    <location>
        <begin position="271"/>
        <end position="291"/>
    </location>
</feature>
<feature type="transmembrane region" description="Helical" evidence="2">
    <location>
        <begin position="292"/>
        <end position="312"/>
    </location>
</feature>
<keyword id="KW-0997">Cell inner membrane</keyword>
<keyword id="KW-1003">Cell membrane</keyword>
<keyword id="KW-0472">Membrane</keyword>
<keyword id="KW-1185">Reference proteome</keyword>
<keyword id="KW-0812">Transmembrane</keyword>
<keyword id="KW-1133">Transmembrane helix</keyword>
<name>ALX_PHOLL</name>
<proteinExistence type="inferred from homology"/>
<sequence>MNSVGSPLLWGSFAVLITIMLLLDLSLQGRKKEQAMSFRQAAVWSVIWVSLSLLFALGLWWYCRETVGVAVANSQVMAFLTGYLLEKALAVDNVFVWLMLFSYFAIPANLQRRVLIYGVLGAIVLRTVMIFAGSWLVSQFSWILYLFGLFLLVTGVKMALVKEDDSPIGDKPFVRWLKAHIRITDNLHGERFFVKEKGLLYATPLILVLILVEISDVIFAVDSIPAIFAVTTDPFIVLTSNLFAILGLRAMYFLLAGVAEKFTMLKYGLSVILAFIGIKMLIIDFYHIPIGGSLGAVASILAVTMIINVWVNKYKATENQ</sequence>
<reference key="1">
    <citation type="journal article" date="2003" name="Nat. Biotechnol.">
        <title>The genome sequence of the entomopathogenic bacterium Photorhabdus luminescens.</title>
        <authorList>
            <person name="Duchaud E."/>
            <person name="Rusniok C."/>
            <person name="Frangeul L."/>
            <person name="Buchrieser C."/>
            <person name="Givaudan A."/>
            <person name="Taourit S."/>
            <person name="Bocs S."/>
            <person name="Boursaux-Eude C."/>
            <person name="Chandler M."/>
            <person name="Charles J.-F."/>
            <person name="Dassa E."/>
            <person name="Derose R."/>
            <person name="Derzelle S."/>
            <person name="Freyssinet G."/>
            <person name="Gaudriault S."/>
            <person name="Medigue C."/>
            <person name="Lanois A."/>
            <person name="Powell K."/>
            <person name="Siguier P."/>
            <person name="Vincent R."/>
            <person name="Wingate V."/>
            <person name="Zouine M."/>
            <person name="Glaser P."/>
            <person name="Boemare N."/>
            <person name="Danchin A."/>
            <person name="Kunst F."/>
        </authorList>
    </citation>
    <scope>NUCLEOTIDE SEQUENCE [LARGE SCALE GENOMIC DNA]</scope>
    <source>
        <strain>DSM 15139 / CIP 105565 / TT01</strain>
    </source>
</reference>
<dbReference type="EMBL" id="BX571872">
    <property type="protein sequence ID" value="CAE16364.1"/>
    <property type="molecule type" value="Genomic_DNA"/>
</dbReference>
<dbReference type="RefSeq" id="WP_011148124.1">
    <property type="nucleotide sequence ID" value="NC_005126.1"/>
</dbReference>
<dbReference type="SMR" id="P60067"/>
<dbReference type="GeneID" id="48850217"/>
<dbReference type="KEGG" id="plu:plu3992"/>
<dbReference type="eggNOG" id="COG0861">
    <property type="taxonomic scope" value="Bacteria"/>
</dbReference>
<dbReference type="HOGENOM" id="CLU_045644_1_2_6"/>
<dbReference type="OrthoDB" id="9783692at2"/>
<dbReference type="Proteomes" id="UP000002514">
    <property type="component" value="Chromosome"/>
</dbReference>
<dbReference type="GO" id="GO:0005886">
    <property type="term" value="C:plasma membrane"/>
    <property type="evidence" value="ECO:0007669"/>
    <property type="project" value="UniProtKB-SubCell"/>
</dbReference>
<dbReference type="InterPro" id="IPR005496">
    <property type="entry name" value="Integral_membrane_TerC"/>
</dbReference>
<dbReference type="InterPro" id="IPR022369">
    <property type="entry name" value="Integral_membrane_TerC_rswitch"/>
</dbReference>
<dbReference type="NCBIfam" id="TIGR03718">
    <property type="entry name" value="R_switched_Alx"/>
    <property type="match status" value="1"/>
</dbReference>
<dbReference type="PANTHER" id="PTHR30238">
    <property type="entry name" value="MEMBRANE BOUND PREDICTED REDOX MODULATOR"/>
    <property type="match status" value="1"/>
</dbReference>
<dbReference type="PANTHER" id="PTHR30238:SF0">
    <property type="entry name" value="THYLAKOID MEMBRANE PROTEIN TERC, CHLOROPLASTIC"/>
    <property type="match status" value="1"/>
</dbReference>
<dbReference type="Pfam" id="PF03741">
    <property type="entry name" value="TerC"/>
    <property type="match status" value="1"/>
</dbReference>
<organism>
    <name type="scientific">Photorhabdus laumondii subsp. laumondii (strain DSM 15139 / CIP 105565 / TT01)</name>
    <name type="common">Photorhabdus luminescens subsp. laumondii</name>
    <dbReference type="NCBI Taxonomy" id="243265"/>
    <lineage>
        <taxon>Bacteria</taxon>
        <taxon>Pseudomonadati</taxon>
        <taxon>Pseudomonadota</taxon>
        <taxon>Gammaproteobacteria</taxon>
        <taxon>Enterobacterales</taxon>
        <taxon>Morganellaceae</taxon>
        <taxon>Photorhabdus</taxon>
    </lineage>
</organism>
<evidence type="ECO:0000250" key="1">
    <source>
        <dbReference type="UniProtKB" id="P42601"/>
    </source>
</evidence>
<evidence type="ECO:0000255" key="2"/>
<evidence type="ECO:0000305" key="3"/>
<comment type="function">
    <text evidence="1">Has been proposed to be a redox modulator.</text>
</comment>
<comment type="subcellular location">
    <subcellularLocation>
        <location evidence="1">Cell inner membrane</location>
        <topology evidence="3">Multi-pass membrane protein</topology>
    </subcellularLocation>
</comment>
<comment type="similarity">
    <text evidence="3">Belongs to the TerC family.</text>
</comment>
<accession>P60067</accession>
<accession>Q7N0A1</accession>
<protein>
    <recommendedName>
        <fullName>Putative membrane-bound redox modulator Alx</fullName>
    </recommendedName>
</protein>